<evidence type="ECO:0000256" key="1">
    <source>
        <dbReference type="SAM" id="MobiDB-lite"/>
    </source>
</evidence>
<evidence type="ECO:0000269" key="2">
    <source>
    </source>
</evidence>
<evidence type="ECO:0000269" key="3">
    <source>
    </source>
</evidence>
<evidence type="ECO:0000269" key="4">
    <source>
    </source>
</evidence>
<evidence type="ECO:0000303" key="5">
    <source>
    </source>
</evidence>
<evidence type="ECO:0000305" key="6"/>
<evidence type="ECO:0000305" key="7">
    <source>
    </source>
</evidence>
<evidence type="ECO:0000312" key="8">
    <source>
        <dbReference type="HGNC" id="HGNC:27252"/>
    </source>
</evidence>
<evidence type="ECO:0007829" key="9">
    <source>
        <dbReference type="PDB" id="8JCD"/>
    </source>
</evidence>
<dbReference type="EMBL" id="AY283369">
    <property type="protein sequence ID" value="AAP37489.1"/>
    <property type="molecule type" value="Genomic_DNA"/>
</dbReference>
<dbReference type="EMBL" id="AY283370">
    <property type="protein sequence ID" value="AAP37490.1"/>
    <property type="molecule type" value="mRNA"/>
</dbReference>
<dbReference type="EMBL" id="AL034485">
    <property type="protein sequence ID" value="CAI43100.2"/>
    <property type="molecule type" value="Genomic_DNA"/>
</dbReference>
<dbReference type="EMBL" id="CH471120">
    <property type="protein sequence ID" value="EAX02765.1"/>
    <property type="molecule type" value="Genomic_DNA"/>
</dbReference>
<dbReference type="EMBL" id="BC038109">
    <property type="protein sequence ID" value="AAH38109.1"/>
    <property type="molecule type" value="mRNA"/>
</dbReference>
<dbReference type="EMBL" id="BC118604">
    <property type="protein sequence ID" value="AAI18605.1"/>
    <property type="molecule type" value="mRNA"/>
</dbReference>
<dbReference type="EMBL" id="BC121816">
    <property type="protein sequence ID" value="AAI21817.1"/>
    <property type="molecule type" value="mRNA"/>
</dbReference>
<dbReference type="CCDS" id="CCDS35362.2">
    <molecule id="Q7Z2G1-3"/>
</dbReference>
<dbReference type="RefSeq" id="NP_001002916.4">
    <molecule id="Q7Z2G1-3"/>
    <property type="nucleotide sequence ID" value="NM_001002916.5"/>
</dbReference>
<dbReference type="PDB" id="8JCC">
    <property type="method" value="EM"/>
    <property type="resolution" value="3.42 A"/>
    <property type="chains" value="D/H=2-153"/>
</dbReference>
<dbReference type="PDB" id="8JCD">
    <property type="method" value="EM"/>
    <property type="resolution" value="3.14 A"/>
    <property type="chains" value="D/H=2-153"/>
</dbReference>
<dbReference type="PDBsum" id="8JCC"/>
<dbReference type="PDBsum" id="8JCD"/>
<dbReference type="EMDB" id="EMD-36157"/>
<dbReference type="EMDB" id="EMD-36158"/>
<dbReference type="SMR" id="Q7Z2G1"/>
<dbReference type="BioGRID" id="127727">
    <property type="interactions" value="17"/>
</dbReference>
<dbReference type="FunCoup" id="Q7Z2G1">
    <property type="interactions" value="26"/>
</dbReference>
<dbReference type="IntAct" id="Q7Z2G1">
    <property type="interactions" value="15"/>
</dbReference>
<dbReference type="STRING" id="9606.ENSP00000354723"/>
<dbReference type="iPTMnet" id="Q7Z2G1"/>
<dbReference type="PhosphoSitePlus" id="Q7Z2G1"/>
<dbReference type="BioMuta" id="H2BFWT"/>
<dbReference type="DMDM" id="223590216"/>
<dbReference type="jPOST" id="Q7Z2G1"/>
<dbReference type="MassIVE" id="Q7Z2G1"/>
<dbReference type="PaxDb" id="9606-ENSP00000354723"/>
<dbReference type="PeptideAtlas" id="Q7Z2G1"/>
<dbReference type="Antibodypedia" id="65963">
    <property type="antibodies" value="100 antibodies from 16 providers"/>
</dbReference>
<dbReference type="DNASU" id="158983"/>
<dbReference type="Ensembl" id="ENST00000217926.7">
    <molecule id="Q7Z2G1-3"/>
    <property type="protein sequence ID" value="ENSP00000354723.5"/>
    <property type="gene ID" value="ENSG00000123569.10"/>
</dbReference>
<dbReference type="GeneID" id="158983"/>
<dbReference type="KEGG" id="hsa:158983"/>
<dbReference type="MANE-Select" id="ENST00000217926.7">
    <molecule id="Q7Z2G1-3"/>
    <property type="protein sequence ID" value="ENSP00000354723.5"/>
    <property type="RefSeq nucleotide sequence ID" value="NM_001002916.5"/>
    <property type="RefSeq protein sequence ID" value="NP_001002916.4"/>
</dbReference>
<dbReference type="UCSC" id="uc004elr.4">
    <molecule id="Q7Z2G1-2"/>
    <property type="organism name" value="human"/>
</dbReference>
<dbReference type="AGR" id="HGNC:27252"/>
<dbReference type="CTD" id="158983"/>
<dbReference type="DisGeNET" id="158983"/>
<dbReference type="GeneCards" id="H2BW1"/>
<dbReference type="HGNC" id="HGNC:27252">
    <property type="gene designation" value="H2BW1"/>
</dbReference>
<dbReference type="HPA" id="ENSG00000123569">
    <property type="expression patterns" value="Not detected"/>
</dbReference>
<dbReference type="MIM" id="300507">
    <property type="type" value="gene"/>
</dbReference>
<dbReference type="neXtProt" id="NX_Q7Z2G1"/>
<dbReference type="OpenTargets" id="ENSG00000123569"/>
<dbReference type="VEuPathDB" id="HostDB:ENSG00000123569"/>
<dbReference type="eggNOG" id="KOG1744">
    <property type="taxonomic scope" value="Eukaryota"/>
</dbReference>
<dbReference type="GeneTree" id="ENSGT01110000267181"/>
<dbReference type="HOGENOM" id="CLU_075666_3_0_1"/>
<dbReference type="InParanoid" id="Q7Z2G1"/>
<dbReference type="OMA" id="WEIRMAV"/>
<dbReference type="OrthoDB" id="9538254at2759"/>
<dbReference type="PAN-GO" id="Q7Z2G1">
    <property type="GO annotations" value="2 GO annotations based on evolutionary models"/>
</dbReference>
<dbReference type="PhylomeDB" id="Q7Z2G1"/>
<dbReference type="TreeFam" id="TF300212"/>
<dbReference type="PathwayCommons" id="Q7Z2G1"/>
<dbReference type="SignaLink" id="Q7Z2G1"/>
<dbReference type="SIGNOR" id="Q7Z2G1"/>
<dbReference type="BioGRID-ORCS" id="158983">
    <property type="hits" value="13 hits in 757 CRISPR screens"/>
</dbReference>
<dbReference type="GeneWiki" id="H2BFWT"/>
<dbReference type="GenomeRNAi" id="158983"/>
<dbReference type="Pharos" id="Q7Z2G1">
    <property type="development level" value="Tbio"/>
</dbReference>
<dbReference type="PRO" id="PR:Q7Z2G1"/>
<dbReference type="Proteomes" id="UP000005640">
    <property type="component" value="Chromosome X"/>
</dbReference>
<dbReference type="RNAct" id="Q7Z2G1">
    <property type="molecule type" value="protein"/>
</dbReference>
<dbReference type="Bgee" id="ENSG00000123569">
    <property type="expression patterns" value="Expressed in male germ line stem cell (sensu Vertebrata) in testis and 9 other cell types or tissues"/>
</dbReference>
<dbReference type="GO" id="GO:0000781">
    <property type="term" value="C:chromosome, telomeric region"/>
    <property type="evidence" value="ECO:0000314"/>
    <property type="project" value="UniProtKB"/>
</dbReference>
<dbReference type="GO" id="GO:0031965">
    <property type="term" value="C:nuclear membrane"/>
    <property type="evidence" value="ECO:0007669"/>
    <property type="project" value="UniProtKB-SubCell"/>
</dbReference>
<dbReference type="GO" id="GO:0000786">
    <property type="term" value="C:nucleosome"/>
    <property type="evidence" value="ECO:0000314"/>
    <property type="project" value="UniProtKB"/>
</dbReference>
<dbReference type="GO" id="GO:0005634">
    <property type="term" value="C:nucleus"/>
    <property type="evidence" value="ECO:0000314"/>
    <property type="project" value="UniProtKB"/>
</dbReference>
<dbReference type="GO" id="GO:0003677">
    <property type="term" value="F:DNA binding"/>
    <property type="evidence" value="ECO:0007669"/>
    <property type="project" value="UniProtKB-KW"/>
</dbReference>
<dbReference type="GO" id="GO:0046982">
    <property type="term" value="F:protein heterodimerization activity"/>
    <property type="evidence" value="ECO:0007669"/>
    <property type="project" value="InterPro"/>
</dbReference>
<dbReference type="GO" id="GO:0030527">
    <property type="term" value="F:structural constituent of chromatin"/>
    <property type="evidence" value="ECO:0000314"/>
    <property type="project" value="UniProtKB"/>
</dbReference>
<dbReference type="CDD" id="cd22910">
    <property type="entry name" value="HFD_H2B"/>
    <property type="match status" value="1"/>
</dbReference>
<dbReference type="FunFam" id="1.10.20.10:FF:000066">
    <property type="entry name" value="H2B histone family member W testis-specific"/>
    <property type="match status" value="1"/>
</dbReference>
<dbReference type="Gene3D" id="1.10.20.10">
    <property type="entry name" value="Histone, subunit A"/>
    <property type="match status" value="1"/>
</dbReference>
<dbReference type="InterPro" id="IPR009072">
    <property type="entry name" value="Histone-fold"/>
</dbReference>
<dbReference type="InterPro" id="IPR007125">
    <property type="entry name" value="Histone_H2A/H2B/H3"/>
</dbReference>
<dbReference type="InterPro" id="IPR000558">
    <property type="entry name" value="Histone_H2B"/>
</dbReference>
<dbReference type="PANTHER" id="PTHR23428">
    <property type="entry name" value="HISTONE H2B"/>
    <property type="match status" value="1"/>
</dbReference>
<dbReference type="Pfam" id="PF00125">
    <property type="entry name" value="Histone"/>
    <property type="match status" value="1"/>
</dbReference>
<dbReference type="PRINTS" id="PR00621">
    <property type="entry name" value="HISTONEH2B"/>
</dbReference>
<dbReference type="SMART" id="SM00427">
    <property type="entry name" value="H2B"/>
    <property type="match status" value="1"/>
</dbReference>
<dbReference type="SUPFAM" id="SSF47113">
    <property type="entry name" value="Histone-fold"/>
    <property type="match status" value="1"/>
</dbReference>
<organism>
    <name type="scientific">Homo sapiens</name>
    <name type="common">Human</name>
    <dbReference type="NCBI Taxonomy" id="9606"/>
    <lineage>
        <taxon>Eukaryota</taxon>
        <taxon>Metazoa</taxon>
        <taxon>Chordata</taxon>
        <taxon>Craniata</taxon>
        <taxon>Vertebrata</taxon>
        <taxon>Euteleostomi</taxon>
        <taxon>Mammalia</taxon>
        <taxon>Eutheria</taxon>
        <taxon>Euarchontoglires</taxon>
        <taxon>Primates</taxon>
        <taxon>Haplorrhini</taxon>
        <taxon>Catarrhini</taxon>
        <taxon>Hominidae</taxon>
        <taxon>Homo</taxon>
    </lineage>
</organism>
<feature type="chain" id="PRO_0000244828" description="Histone H2B type W-T">
    <location>
        <begin position="1"/>
        <end position="153"/>
    </location>
</feature>
<feature type="region of interest" description="Disordered" evidence="1">
    <location>
        <begin position="1"/>
        <end position="54"/>
    </location>
</feature>
<feature type="compositionally biased region" description="Polar residues" evidence="1">
    <location>
        <begin position="11"/>
        <end position="36"/>
    </location>
</feature>
<feature type="compositionally biased region" description="Basic residues" evidence="1">
    <location>
        <begin position="37"/>
        <end position="52"/>
    </location>
</feature>
<feature type="splice variant" id="VSP_062143" description="In isoform 3.">
    <location>
        <begin position="1"/>
        <end position="6"/>
    </location>
</feature>
<feature type="splice variant" id="VSP_062144" description="In isoform 1.">
    <original>M</original>
    <variation>MLRTEVPRLPRSTTAIVWSCHLM</variation>
    <location>
        <position position="1"/>
    </location>
</feature>
<feature type="sequence variant" id="VAR_049315" description="In dbSNP:rs17332043.">
    <original>R</original>
    <variation>W</variation>
    <location>
        <position position="65"/>
    </location>
</feature>
<feature type="sequence variant" id="VAR_054318" description="In dbSNP:rs553509.">
    <original>H</original>
    <variation>R</variation>
    <location>
        <position position="101"/>
    </location>
</feature>
<feature type="helix" evidence="9">
    <location>
        <begin position="61"/>
        <end position="69"/>
    </location>
</feature>
<feature type="helix" evidence="9">
    <location>
        <begin position="78"/>
        <end position="106"/>
    </location>
</feature>
<feature type="helix" evidence="9">
    <location>
        <begin position="113"/>
        <end position="123"/>
    </location>
</feature>
<feature type="helix" evidence="9">
    <location>
        <begin position="126"/>
        <end position="149"/>
    </location>
</feature>
<proteinExistence type="evidence at protein level"/>
<comment type="function">
    <text evidence="2 3 4">Atypical histone H2B that can form nucleosomes structurally and dynamically indistinguishable from those containing conventional H2B. Nucleosomes wrap and compact DNA into chromatin, limiting DNA accessibility to the cellular machineries which require DNA as a template. Histones thereby play a central role in transcription regulation, DNA repair, DNA replication and chromosomal stability. DNA accessibility is regulated via a complex set of post-translational modifications of histones, also called histone code, and nucleosome remodeling (PubMed:15475252, PubMed:16449661). However, unlike conventional H2B, does not recruit chromosome condensation factors and does not participate in the assembly of mitotic chromosomes (PubMed:16449661). May be important for telomere function and play a role in spermatogenesis (PubMed:16449661, PubMed:19583817).</text>
</comment>
<comment type="subunit">
    <text evidence="3 7">Can replace the conventional histone H2B in the nucleosome (PubMed:16449661). The nucleosome is a histone octamer containing two molecules each of H2A, H2B, H3 and H4 assembled in one H3-H4 heterotetramer and two H2A-H2B heterodimers. The octamer wraps approximately 147 bp of DNA (Probable).</text>
</comment>
<comment type="interaction">
    <interactant intactId="EBI-18200422">
        <id>Q7Z2G1</id>
    </interactant>
    <interactant intactId="EBI-10251630">
        <id>Q6NXS1</id>
        <label>PPP1R2B</label>
    </interactant>
    <organismsDiffer>false</organismsDiffer>
    <experiments>3</experiments>
</comment>
<comment type="subcellular location">
    <subcellularLocation>
        <location evidence="2">Nucleus membrane</location>
    </subcellularLocation>
    <subcellularLocation>
        <location evidence="2">Chromosome</location>
    </subcellularLocation>
    <subcellularLocation>
        <location evidence="2">Chromosome</location>
        <location evidence="2">Telomere</location>
    </subcellularLocation>
</comment>
<comment type="alternative products">
    <event type="alternative initiation"/>
    <isoform>
        <id>Q7Z2G1-2</id>
        <name>2</name>
        <sequence type="displayed"/>
    </isoform>
    <isoform>
        <id>Q7Z2G1-1</id>
        <name>1</name>
        <sequence type="described" ref="VSP_062144"/>
    </isoform>
    <isoform>
        <id>Q7Z2G1-3</id>
        <name>3</name>
        <sequence type="described" ref="VSP_062143"/>
    </isoform>
</comment>
<comment type="tissue specificity">
    <text evidence="2 4">Testis-specific (at protein level).</text>
</comment>
<comment type="miscellaneous">
    <text>In contrast to other H2B histones, it does not contain the conserved residue in C-terminus that is the target of monoubiquitination.</text>
</comment>
<comment type="miscellaneous">
    <molecule>Isoform 3</molecule>
    <text>Gene prediction based on conservation.</text>
</comment>
<comment type="miscellaneous">
    <text evidence="2">Has orthologs in primates, but not in rodents.</text>
</comment>
<comment type="similarity">
    <text evidence="6">Belongs to the histone H2B family.</text>
</comment>
<protein>
    <recommendedName>
        <fullName evidence="6">Histone H2B type W-T</fullName>
    </recommendedName>
    <alternativeName>
        <fullName>H2B histone family member W testis-specific</fullName>
    </alternativeName>
    <alternativeName>
        <fullName evidence="8">H2B.W histone 1</fullName>
    </alternativeName>
</protein>
<gene>
    <name evidence="8" type="primary">H2BW1</name>
    <name evidence="8" type="synonym">H2BFWT</name>
    <name evidence="5" type="synonym">TH2B-175</name>
</gene>
<name>H2BWT_HUMAN</name>
<reference key="1">
    <citation type="journal article" date="2004" name="Genomics">
        <title>Novel human testis-specific histone H2B encoded by the interrupted gene on the X chromosome.</title>
        <authorList>
            <person name="Churikov D."/>
            <person name="Siino J."/>
            <person name="Svetlova M."/>
            <person name="Zhang K."/>
            <person name="Gineitis A."/>
            <person name="Bradbury E.M."/>
            <person name="Zalensky A."/>
        </authorList>
    </citation>
    <scope>NUCLEOTIDE SEQUENCE [GENOMIC DNA / MRNA] (ISOFORM 1)</scope>
    <scope>FUNCTION</scope>
    <scope>TISSUE SPECIFICITY</scope>
    <scope>SUBCELLULAR LOCATION</scope>
    <scope>MISCELLANEOUS</scope>
    <source>
        <tissue>Testis</tissue>
    </source>
</reference>
<reference key="2">
    <citation type="journal article" date="2005" name="Nature">
        <title>The DNA sequence of the human X chromosome.</title>
        <authorList>
            <person name="Ross M.T."/>
            <person name="Grafham D.V."/>
            <person name="Coffey A.J."/>
            <person name="Scherer S."/>
            <person name="McLay K."/>
            <person name="Muzny D."/>
            <person name="Platzer M."/>
            <person name="Howell G.R."/>
            <person name="Burrows C."/>
            <person name="Bird C.P."/>
            <person name="Frankish A."/>
            <person name="Lovell F.L."/>
            <person name="Howe K.L."/>
            <person name="Ashurst J.L."/>
            <person name="Fulton R.S."/>
            <person name="Sudbrak R."/>
            <person name="Wen G."/>
            <person name="Jones M.C."/>
            <person name="Hurles M.E."/>
            <person name="Andrews T.D."/>
            <person name="Scott C.E."/>
            <person name="Searle S."/>
            <person name="Ramser J."/>
            <person name="Whittaker A."/>
            <person name="Deadman R."/>
            <person name="Carter N.P."/>
            <person name="Hunt S.E."/>
            <person name="Chen R."/>
            <person name="Cree A."/>
            <person name="Gunaratne P."/>
            <person name="Havlak P."/>
            <person name="Hodgson A."/>
            <person name="Metzker M.L."/>
            <person name="Richards S."/>
            <person name="Scott G."/>
            <person name="Steffen D."/>
            <person name="Sodergren E."/>
            <person name="Wheeler D.A."/>
            <person name="Worley K.C."/>
            <person name="Ainscough R."/>
            <person name="Ambrose K.D."/>
            <person name="Ansari-Lari M.A."/>
            <person name="Aradhya S."/>
            <person name="Ashwell R.I."/>
            <person name="Babbage A.K."/>
            <person name="Bagguley C.L."/>
            <person name="Ballabio A."/>
            <person name="Banerjee R."/>
            <person name="Barker G.E."/>
            <person name="Barlow K.F."/>
            <person name="Barrett I.P."/>
            <person name="Bates K.N."/>
            <person name="Beare D.M."/>
            <person name="Beasley H."/>
            <person name="Beasley O."/>
            <person name="Beck A."/>
            <person name="Bethel G."/>
            <person name="Blechschmidt K."/>
            <person name="Brady N."/>
            <person name="Bray-Allen S."/>
            <person name="Bridgeman A.M."/>
            <person name="Brown A.J."/>
            <person name="Brown M.J."/>
            <person name="Bonnin D."/>
            <person name="Bruford E.A."/>
            <person name="Buhay C."/>
            <person name="Burch P."/>
            <person name="Burford D."/>
            <person name="Burgess J."/>
            <person name="Burrill W."/>
            <person name="Burton J."/>
            <person name="Bye J.M."/>
            <person name="Carder C."/>
            <person name="Carrel L."/>
            <person name="Chako J."/>
            <person name="Chapman J.C."/>
            <person name="Chavez D."/>
            <person name="Chen E."/>
            <person name="Chen G."/>
            <person name="Chen Y."/>
            <person name="Chen Z."/>
            <person name="Chinault C."/>
            <person name="Ciccodicola A."/>
            <person name="Clark S.Y."/>
            <person name="Clarke G."/>
            <person name="Clee C.M."/>
            <person name="Clegg S."/>
            <person name="Clerc-Blankenburg K."/>
            <person name="Clifford K."/>
            <person name="Cobley V."/>
            <person name="Cole C.G."/>
            <person name="Conquer J.S."/>
            <person name="Corby N."/>
            <person name="Connor R.E."/>
            <person name="David R."/>
            <person name="Davies J."/>
            <person name="Davis C."/>
            <person name="Davis J."/>
            <person name="Delgado O."/>
            <person name="Deshazo D."/>
            <person name="Dhami P."/>
            <person name="Ding Y."/>
            <person name="Dinh H."/>
            <person name="Dodsworth S."/>
            <person name="Draper H."/>
            <person name="Dugan-Rocha S."/>
            <person name="Dunham A."/>
            <person name="Dunn M."/>
            <person name="Durbin K.J."/>
            <person name="Dutta I."/>
            <person name="Eades T."/>
            <person name="Ellwood M."/>
            <person name="Emery-Cohen A."/>
            <person name="Errington H."/>
            <person name="Evans K.L."/>
            <person name="Faulkner L."/>
            <person name="Francis F."/>
            <person name="Frankland J."/>
            <person name="Fraser A.E."/>
            <person name="Galgoczy P."/>
            <person name="Gilbert J."/>
            <person name="Gill R."/>
            <person name="Gloeckner G."/>
            <person name="Gregory S.G."/>
            <person name="Gribble S."/>
            <person name="Griffiths C."/>
            <person name="Grocock R."/>
            <person name="Gu Y."/>
            <person name="Gwilliam R."/>
            <person name="Hamilton C."/>
            <person name="Hart E.A."/>
            <person name="Hawes A."/>
            <person name="Heath P.D."/>
            <person name="Heitmann K."/>
            <person name="Hennig S."/>
            <person name="Hernandez J."/>
            <person name="Hinzmann B."/>
            <person name="Ho S."/>
            <person name="Hoffs M."/>
            <person name="Howden P.J."/>
            <person name="Huckle E.J."/>
            <person name="Hume J."/>
            <person name="Hunt P.J."/>
            <person name="Hunt A.R."/>
            <person name="Isherwood J."/>
            <person name="Jacob L."/>
            <person name="Johnson D."/>
            <person name="Jones S."/>
            <person name="de Jong P.J."/>
            <person name="Joseph S.S."/>
            <person name="Keenan S."/>
            <person name="Kelly S."/>
            <person name="Kershaw J.K."/>
            <person name="Khan Z."/>
            <person name="Kioschis P."/>
            <person name="Klages S."/>
            <person name="Knights A.J."/>
            <person name="Kosiura A."/>
            <person name="Kovar-Smith C."/>
            <person name="Laird G.K."/>
            <person name="Langford C."/>
            <person name="Lawlor S."/>
            <person name="Leversha M."/>
            <person name="Lewis L."/>
            <person name="Liu W."/>
            <person name="Lloyd C."/>
            <person name="Lloyd D.M."/>
            <person name="Loulseged H."/>
            <person name="Loveland J.E."/>
            <person name="Lovell J.D."/>
            <person name="Lozado R."/>
            <person name="Lu J."/>
            <person name="Lyne R."/>
            <person name="Ma J."/>
            <person name="Maheshwari M."/>
            <person name="Matthews L.H."/>
            <person name="McDowall J."/>
            <person name="McLaren S."/>
            <person name="McMurray A."/>
            <person name="Meidl P."/>
            <person name="Meitinger T."/>
            <person name="Milne S."/>
            <person name="Miner G."/>
            <person name="Mistry S.L."/>
            <person name="Morgan M."/>
            <person name="Morris S."/>
            <person name="Mueller I."/>
            <person name="Mullikin J.C."/>
            <person name="Nguyen N."/>
            <person name="Nordsiek G."/>
            <person name="Nyakatura G."/>
            <person name="O'dell C.N."/>
            <person name="Okwuonu G."/>
            <person name="Palmer S."/>
            <person name="Pandian R."/>
            <person name="Parker D."/>
            <person name="Parrish J."/>
            <person name="Pasternak S."/>
            <person name="Patel D."/>
            <person name="Pearce A.V."/>
            <person name="Pearson D.M."/>
            <person name="Pelan S.E."/>
            <person name="Perez L."/>
            <person name="Porter K.M."/>
            <person name="Ramsey Y."/>
            <person name="Reichwald K."/>
            <person name="Rhodes S."/>
            <person name="Ridler K.A."/>
            <person name="Schlessinger D."/>
            <person name="Schueler M.G."/>
            <person name="Sehra H.K."/>
            <person name="Shaw-Smith C."/>
            <person name="Shen H."/>
            <person name="Sheridan E.M."/>
            <person name="Shownkeen R."/>
            <person name="Skuce C.D."/>
            <person name="Smith M.L."/>
            <person name="Sotheran E.C."/>
            <person name="Steingruber H.E."/>
            <person name="Steward C.A."/>
            <person name="Storey R."/>
            <person name="Swann R.M."/>
            <person name="Swarbreck D."/>
            <person name="Tabor P.E."/>
            <person name="Taudien S."/>
            <person name="Taylor T."/>
            <person name="Teague B."/>
            <person name="Thomas K."/>
            <person name="Thorpe A."/>
            <person name="Timms K."/>
            <person name="Tracey A."/>
            <person name="Trevanion S."/>
            <person name="Tromans A.C."/>
            <person name="d'Urso M."/>
            <person name="Verduzco D."/>
            <person name="Villasana D."/>
            <person name="Waldron L."/>
            <person name="Wall M."/>
            <person name="Wang Q."/>
            <person name="Warren J."/>
            <person name="Warry G.L."/>
            <person name="Wei X."/>
            <person name="West A."/>
            <person name="Whitehead S.L."/>
            <person name="Whiteley M.N."/>
            <person name="Wilkinson J.E."/>
            <person name="Willey D.L."/>
            <person name="Williams G."/>
            <person name="Williams L."/>
            <person name="Williamson A."/>
            <person name="Williamson H."/>
            <person name="Wilming L."/>
            <person name="Woodmansey R.L."/>
            <person name="Wray P.W."/>
            <person name="Yen J."/>
            <person name="Zhang J."/>
            <person name="Zhou J."/>
            <person name="Zoghbi H."/>
            <person name="Zorilla S."/>
            <person name="Buck D."/>
            <person name="Reinhardt R."/>
            <person name="Poustka A."/>
            <person name="Rosenthal A."/>
            <person name="Lehrach H."/>
            <person name="Meindl A."/>
            <person name="Minx P.J."/>
            <person name="Hillier L.W."/>
            <person name="Willard H.F."/>
            <person name="Wilson R.K."/>
            <person name="Waterston R.H."/>
            <person name="Rice C.M."/>
            <person name="Vaudin M."/>
            <person name="Coulson A."/>
            <person name="Nelson D.L."/>
            <person name="Weinstock G."/>
            <person name="Sulston J.E."/>
            <person name="Durbin R.M."/>
            <person name="Hubbard T."/>
            <person name="Gibbs R.A."/>
            <person name="Beck S."/>
            <person name="Rogers J."/>
            <person name="Bentley D.R."/>
        </authorList>
    </citation>
    <scope>NUCLEOTIDE SEQUENCE [LARGE SCALE GENOMIC DNA]</scope>
</reference>
<reference key="3">
    <citation type="submission" date="2005-09" db="EMBL/GenBank/DDBJ databases">
        <authorList>
            <person name="Mural R.J."/>
            <person name="Istrail S."/>
            <person name="Sutton G.G."/>
            <person name="Florea L."/>
            <person name="Halpern A.L."/>
            <person name="Mobarry C.M."/>
            <person name="Lippert R."/>
            <person name="Walenz B."/>
            <person name="Shatkay H."/>
            <person name="Dew I."/>
            <person name="Miller J.R."/>
            <person name="Flanigan M.J."/>
            <person name="Edwards N.J."/>
            <person name="Bolanos R."/>
            <person name="Fasulo D."/>
            <person name="Halldorsson B.V."/>
            <person name="Hannenhalli S."/>
            <person name="Turner R."/>
            <person name="Yooseph S."/>
            <person name="Lu F."/>
            <person name="Nusskern D.R."/>
            <person name="Shue B.C."/>
            <person name="Zheng X.H."/>
            <person name="Zhong F."/>
            <person name="Delcher A.L."/>
            <person name="Huson D.H."/>
            <person name="Kravitz S.A."/>
            <person name="Mouchard L."/>
            <person name="Reinert K."/>
            <person name="Remington K.A."/>
            <person name="Clark A.G."/>
            <person name="Waterman M.S."/>
            <person name="Eichler E.E."/>
            <person name="Adams M.D."/>
            <person name="Hunkapiller M.W."/>
            <person name="Myers E.W."/>
            <person name="Venter J.C."/>
        </authorList>
    </citation>
    <scope>NUCLEOTIDE SEQUENCE [LARGE SCALE GENOMIC DNA]</scope>
</reference>
<reference key="4">
    <citation type="journal article" date="2004" name="Genome Res.">
        <title>The status, quality, and expansion of the NIH full-length cDNA project: the Mammalian Gene Collection (MGC).</title>
        <authorList>
            <consortium name="The MGC Project Team"/>
        </authorList>
    </citation>
    <scope>NUCLEOTIDE SEQUENCE [LARGE SCALE MRNA] (ISOFORM 1)</scope>
    <source>
        <tissue>Testis</tissue>
    </source>
</reference>
<reference key="5">
    <citation type="journal article" date="2006" name="Mol. Cell. Biol.">
        <title>The NH2 tail of the novel histone variant H2BFWT exhibits properties distinct from conventional H2B with respect to the assembly of mitotic chromosomes.</title>
        <authorList>
            <person name="Boulard M."/>
            <person name="Gautier T."/>
            <person name="Mbele G.O."/>
            <person name="Gerson V."/>
            <person name="Hamiche A."/>
            <person name="Angelov D."/>
            <person name="Bouvet P."/>
            <person name="Dimitrov S."/>
        </authorList>
    </citation>
    <scope>FUNCTION</scope>
    <scope>ALTERNATIVE SPLICING (ISOFORM 2)</scope>
</reference>
<reference key="6">
    <citation type="journal article" date="2009" name="J. Cell. Mol. Med.">
        <title>Functional polymorphism in H2BFWT-5'UTR is associated with susceptibility to male infertility.</title>
        <authorList>
            <person name="Lee J."/>
            <person name="Park H.S."/>
            <person name="Kim H.H."/>
            <person name="Yun Y.J."/>
            <person name="Lee D.R."/>
            <person name="Lee S."/>
        </authorList>
    </citation>
    <scope>FUNCTION</scope>
    <scope>ALTERNATIVE SPLICING (ISOFORM 1)</scope>
    <scope>TISSUE SPECIFICITY</scope>
</reference>
<sequence>MATASAMAGPSSETTSEEQLITQEPKEANSTTSQKQSKQRKRGRHGPRRCHSNCRGDSFATYFRRVLKQVHQGLSLSREAVSVMDSLVHDILDRIATEAGHLARSTKRQTITAWETRMAVRLLLPGQMGKLAESEGTKAVLRTSLYAIQQQRK</sequence>
<accession>Q7Z2G1</accession>
<accession>B1AK72</accession>
<accession>Q147W3</accession>
<keyword id="KW-0002">3D-structure</keyword>
<keyword id="KW-0024">Alternative initiation</keyword>
<keyword id="KW-0158">Chromosome</keyword>
<keyword id="KW-0238">DNA-binding</keyword>
<keyword id="KW-0472">Membrane</keyword>
<keyword id="KW-0544">Nucleosome core</keyword>
<keyword id="KW-0539">Nucleus</keyword>
<keyword id="KW-1185">Reference proteome</keyword>
<keyword id="KW-0779">Telomere</keyword>